<accession>A7FG81</accession>
<sequence length="152" mass="17097">MQIWVDADACPNVIKEVLFRAADRTGMMVTLVANQPLKTPPSKFIRTVQVASGFDVADNEIVQRVEKNDLVITADIPLAAEVIEKGGIALNPRGERYTPDTIRERLNMRDFMDTMRASGIQTGGPNTLNQRDRQQFANELDKWLQQARNQAK</sequence>
<comment type="similarity">
    <text evidence="1">Belongs to the UPF0178 family.</text>
</comment>
<protein>
    <recommendedName>
        <fullName evidence="1">UPF0178 protein YpsIP31758_1279</fullName>
    </recommendedName>
</protein>
<proteinExistence type="inferred from homology"/>
<dbReference type="EMBL" id="CP000720">
    <property type="protein sequence ID" value="ABS49456.1"/>
    <property type="molecule type" value="Genomic_DNA"/>
</dbReference>
<dbReference type="RefSeq" id="WP_002208527.1">
    <property type="nucleotide sequence ID" value="NC_009708.1"/>
</dbReference>
<dbReference type="KEGG" id="ypi:YpsIP31758_1279"/>
<dbReference type="HOGENOM" id="CLU_106619_1_0_6"/>
<dbReference type="Proteomes" id="UP000002412">
    <property type="component" value="Chromosome"/>
</dbReference>
<dbReference type="CDD" id="cd18720">
    <property type="entry name" value="PIN_YqxD-like"/>
    <property type="match status" value="1"/>
</dbReference>
<dbReference type="HAMAP" id="MF_00489">
    <property type="entry name" value="UPF0178"/>
    <property type="match status" value="1"/>
</dbReference>
<dbReference type="InterPro" id="IPR003791">
    <property type="entry name" value="UPF0178"/>
</dbReference>
<dbReference type="NCBIfam" id="NF001095">
    <property type="entry name" value="PRK00124.1"/>
    <property type="match status" value="1"/>
</dbReference>
<dbReference type="PANTHER" id="PTHR35146">
    <property type="entry name" value="UPF0178 PROTEIN YAII"/>
    <property type="match status" value="1"/>
</dbReference>
<dbReference type="PANTHER" id="PTHR35146:SF1">
    <property type="entry name" value="UPF0178 PROTEIN YAII"/>
    <property type="match status" value="1"/>
</dbReference>
<dbReference type="Pfam" id="PF02639">
    <property type="entry name" value="DUF188"/>
    <property type="match status" value="1"/>
</dbReference>
<gene>
    <name type="ordered locus">YpsIP31758_1279</name>
</gene>
<feature type="chain" id="PRO_1000060451" description="UPF0178 protein YpsIP31758_1279">
    <location>
        <begin position="1"/>
        <end position="152"/>
    </location>
</feature>
<name>Y1279_YERP3</name>
<reference key="1">
    <citation type="journal article" date="2007" name="PLoS Genet.">
        <title>The complete genome sequence of Yersinia pseudotuberculosis IP31758, the causative agent of Far East scarlet-like fever.</title>
        <authorList>
            <person name="Eppinger M."/>
            <person name="Rosovitz M.J."/>
            <person name="Fricke W.F."/>
            <person name="Rasko D.A."/>
            <person name="Kokorina G."/>
            <person name="Fayolle C."/>
            <person name="Lindler L.E."/>
            <person name="Carniel E."/>
            <person name="Ravel J."/>
        </authorList>
    </citation>
    <scope>NUCLEOTIDE SEQUENCE [LARGE SCALE GENOMIC DNA]</scope>
    <source>
        <strain>IP 31758</strain>
    </source>
</reference>
<organism>
    <name type="scientific">Yersinia pseudotuberculosis serotype O:1b (strain IP 31758)</name>
    <dbReference type="NCBI Taxonomy" id="349747"/>
    <lineage>
        <taxon>Bacteria</taxon>
        <taxon>Pseudomonadati</taxon>
        <taxon>Pseudomonadota</taxon>
        <taxon>Gammaproteobacteria</taxon>
        <taxon>Enterobacterales</taxon>
        <taxon>Yersiniaceae</taxon>
        <taxon>Yersinia</taxon>
    </lineage>
</organism>
<evidence type="ECO:0000255" key="1">
    <source>
        <dbReference type="HAMAP-Rule" id="MF_00489"/>
    </source>
</evidence>